<feature type="chain" id="PRO_0000092737" description="Phosphonates import ATP-binding protein PhnC">
    <location>
        <begin position="1"/>
        <end position="256"/>
    </location>
</feature>
<feature type="domain" description="ABC transporter" evidence="1">
    <location>
        <begin position="3"/>
        <end position="247"/>
    </location>
</feature>
<feature type="binding site" evidence="1">
    <location>
        <begin position="36"/>
        <end position="43"/>
    </location>
    <ligand>
        <name>ATP</name>
        <dbReference type="ChEBI" id="CHEBI:30616"/>
    </ligand>
</feature>
<keyword id="KW-0067">ATP-binding</keyword>
<keyword id="KW-0997">Cell inner membrane</keyword>
<keyword id="KW-1003">Cell membrane</keyword>
<keyword id="KW-0472">Membrane</keyword>
<keyword id="KW-0547">Nucleotide-binding</keyword>
<keyword id="KW-0918">Phosphonate transport</keyword>
<keyword id="KW-1185">Reference proteome</keyword>
<keyword id="KW-1278">Translocase</keyword>
<keyword id="KW-0813">Transport</keyword>
<protein>
    <recommendedName>
        <fullName evidence="1">Phosphonates import ATP-binding protein PhnC</fullName>
        <ecNumber evidence="1">7.3.2.2</ecNumber>
    </recommendedName>
</protein>
<name>PHNC_TREDE</name>
<gene>
    <name evidence="1" type="primary">phnC</name>
    <name type="ordered locus">TDE_0928</name>
</gene>
<comment type="function">
    <text evidence="1">Part of the ABC transporter complex PhnCDE involved in phosphonates import. Responsible for energy coupling to the transport system.</text>
</comment>
<comment type="catalytic activity">
    <reaction evidence="1">
        <text>phosphonate(out) + ATP + H2O = phosphonate(in) + ADP + phosphate + H(+)</text>
        <dbReference type="Rhea" id="RHEA:18065"/>
        <dbReference type="ChEBI" id="CHEBI:15377"/>
        <dbReference type="ChEBI" id="CHEBI:15378"/>
        <dbReference type="ChEBI" id="CHEBI:16215"/>
        <dbReference type="ChEBI" id="CHEBI:30616"/>
        <dbReference type="ChEBI" id="CHEBI:43474"/>
        <dbReference type="ChEBI" id="CHEBI:456216"/>
        <dbReference type="EC" id="7.3.2.2"/>
    </reaction>
</comment>
<comment type="subunit">
    <text evidence="1">The complex is composed of two ATP-binding proteins (PhnC), two transmembrane proteins (PhnE) and a solute-binding protein (PhnD).</text>
</comment>
<comment type="subcellular location">
    <subcellularLocation>
        <location evidence="1">Cell inner membrane</location>
        <topology evidence="1">Peripheral membrane protein</topology>
    </subcellularLocation>
</comment>
<comment type="similarity">
    <text evidence="1">Belongs to the ABC transporter superfamily. Phosphonates importer (TC 3.A.1.9.1) family.</text>
</comment>
<accession>Q73P71</accession>
<reference key="1">
    <citation type="journal article" date="2004" name="Proc. Natl. Acad. Sci. U.S.A.">
        <title>Comparison of the genome of the oral pathogen Treponema denticola with other spirochete genomes.</title>
        <authorList>
            <person name="Seshadri R."/>
            <person name="Myers G.S.A."/>
            <person name="Tettelin H."/>
            <person name="Eisen J.A."/>
            <person name="Heidelberg J.F."/>
            <person name="Dodson R.J."/>
            <person name="Davidsen T.M."/>
            <person name="DeBoy R.T."/>
            <person name="Fouts D.E."/>
            <person name="Haft D.H."/>
            <person name="Selengut J."/>
            <person name="Ren Q."/>
            <person name="Brinkac L.M."/>
            <person name="Madupu R."/>
            <person name="Kolonay J.F."/>
            <person name="Durkin S.A."/>
            <person name="Daugherty S.C."/>
            <person name="Shetty J."/>
            <person name="Shvartsbeyn A."/>
            <person name="Gebregeorgis E."/>
            <person name="Geer K."/>
            <person name="Tsegaye G."/>
            <person name="Malek J.A."/>
            <person name="Ayodeji B."/>
            <person name="Shatsman S."/>
            <person name="McLeod M.P."/>
            <person name="Smajs D."/>
            <person name="Howell J.K."/>
            <person name="Pal S."/>
            <person name="Amin A."/>
            <person name="Vashisth P."/>
            <person name="McNeill T.Z."/>
            <person name="Xiang Q."/>
            <person name="Sodergren E."/>
            <person name="Baca E."/>
            <person name="Weinstock G.M."/>
            <person name="Norris S.J."/>
            <person name="Fraser C.M."/>
            <person name="Paulsen I.T."/>
        </authorList>
    </citation>
    <scope>NUCLEOTIDE SEQUENCE [LARGE SCALE GENOMIC DNA]</scope>
    <source>
        <strain>ATCC 35405 / DSM 14222 / CIP 103919 / JCM 8153 / KCTC 15104</strain>
    </source>
</reference>
<evidence type="ECO:0000255" key="1">
    <source>
        <dbReference type="HAMAP-Rule" id="MF_01713"/>
    </source>
</evidence>
<sequence>MILELKNISKTYPSGRRALQSISFKIEEGEILAIIGLSGAGKSTMLRCINRLVEPDEGEVIFLGEKINKLKGKKLRQYRSKIGMIFQNYNLVERLNAVENVLHGCLGSIPSYRGALGLYTEEEKEKAFALLQTVGMEEFAFQRCSELSGGQKQRIGIARALMQSPKLLLCDEPIASLDPQSSETVLNYIKEFAVNKNIACLISLHQMEAAKKYADRIIALNNGKIVFDGIPDSLNDEVLHKEIFTNVSIDSGEKSL</sequence>
<dbReference type="EC" id="7.3.2.2" evidence="1"/>
<dbReference type="EMBL" id="AE017226">
    <property type="protein sequence ID" value="AAS11419.1"/>
    <property type="molecule type" value="Genomic_DNA"/>
</dbReference>
<dbReference type="RefSeq" id="NP_971538.1">
    <property type="nucleotide sequence ID" value="NC_002967.9"/>
</dbReference>
<dbReference type="RefSeq" id="WP_002682233.1">
    <property type="nucleotide sequence ID" value="NC_002967.9"/>
</dbReference>
<dbReference type="SMR" id="Q73P71"/>
<dbReference type="STRING" id="243275.TDE_0928"/>
<dbReference type="PaxDb" id="243275-TDE_0928"/>
<dbReference type="GeneID" id="2740393"/>
<dbReference type="KEGG" id="tde:TDE_0928"/>
<dbReference type="PATRIC" id="fig|243275.7.peg.896"/>
<dbReference type="eggNOG" id="COG3638">
    <property type="taxonomic scope" value="Bacteria"/>
</dbReference>
<dbReference type="HOGENOM" id="CLU_000604_1_22_12"/>
<dbReference type="OrthoDB" id="9805538at2"/>
<dbReference type="Proteomes" id="UP000008212">
    <property type="component" value="Chromosome"/>
</dbReference>
<dbReference type="GO" id="GO:0005886">
    <property type="term" value="C:plasma membrane"/>
    <property type="evidence" value="ECO:0007669"/>
    <property type="project" value="UniProtKB-SubCell"/>
</dbReference>
<dbReference type="GO" id="GO:0015416">
    <property type="term" value="F:ABC-type phosphonate transporter activity"/>
    <property type="evidence" value="ECO:0007669"/>
    <property type="project" value="UniProtKB-EC"/>
</dbReference>
<dbReference type="GO" id="GO:0005524">
    <property type="term" value="F:ATP binding"/>
    <property type="evidence" value="ECO:0007669"/>
    <property type="project" value="UniProtKB-KW"/>
</dbReference>
<dbReference type="GO" id="GO:0016887">
    <property type="term" value="F:ATP hydrolysis activity"/>
    <property type="evidence" value="ECO:0007669"/>
    <property type="project" value="InterPro"/>
</dbReference>
<dbReference type="CDD" id="cd03256">
    <property type="entry name" value="ABC_PhnC_transporter"/>
    <property type="match status" value="1"/>
</dbReference>
<dbReference type="Gene3D" id="3.40.50.300">
    <property type="entry name" value="P-loop containing nucleotide triphosphate hydrolases"/>
    <property type="match status" value="1"/>
</dbReference>
<dbReference type="InterPro" id="IPR003593">
    <property type="entry name" value="AAA+_ATPase"/>
</dbReference>
<dbReference type="InterPro" id="IPR003439">
    <property type="entry name" value="ABC_transporter-like_ATP-bd"/>
</dbReference>
<dbReference type="InterPro" id="IPR017871">
    <property type="entry name" value="ABC_transporter-like_CS"/>
</dbReference>
<dbReference type="InterPro" id="IPR012693">
    <property type="entry name" value="ABC_transpr_PhnC"/>
</dbReference>
<dbReference type="InterPro" id="IPR050086">
    <property type="entry name" value="MetN_ABC_transporter-like"/>
</dbReference>
<dbReference type="InterPro" id="IPR027417">
    <property type="entry name" value="P-loop_NTPase"/>
</dbReference>
<dbReference type="NCBIfam" id="TIGR02315">
    <property type="entry name" value="ABC_phnC"/>
    <property type="match status" value="1"/>
</dbReference>
<dbReference type="PANTHER" id="PTHR43166">
    <property type="entry name" value="AMINO ACID IMPORT ATP-BINDING PROTEIN"/>
    <property type="match status" value="1"/>
</dbReference>
<dbReference type="PANTHER" id="PTHR43166:SF6">
    <property type="entry name" value="PHOSPHONATES IMPORT ATP-BINDING PROTEIN PHNC"/>
    <property type="match status" value="1"/>
</dbReference>
<dbReference type="Pfam" id="PF00005">
    <property type="entry name" value="ABC_tran"/>
    <property type="match status" value="1"/>
</dbReference>
<dbReference type="SMART" id="SM00382">
    <property type="entry name" value="AAA"/>
    <property type="match status" value="1"/>
</dbReference>
<dbReference type="SUPFAM" id="SSF52540">
    <property type="entry name" value="P-loop containing nucleoside triphosphate hydrolases"/>
    <property type="match status" value="1"/>
</dbReference>
<dbReference type="PROSITE" id="PS00211">
    <property type="entry name" value="ABC_TRANSPORTER_1"/>
    <property type="match status" value="1"/>
</dbReference>
<dbReference type="PROSITE" id="PS50893">
    <property type="entry name" value="ABC_TRANSPORTER_2"/>
    <property type="match status" value="1"/>
</dbReference>
<dbReference type="PROSITE" id="PS51249">
    <property type="entry name" value="PHNC"/>
    <property type="match status" value="1"/>
</dbReference>
<proteinExistence type="inferred from homology"/>
<organism>
    <name type="scientific">Treponema denticola (strain ATCC 35405 / DSM 14222 / CIP 103919 / JCM 8153 / KCTC 15104)</name>
    <dbReference type="NCBI Taxonomy" id="243275"/>
    <lineage>
        <taxon>Bacteria</taxon>
        <taxon>Pseudomonadati</taxon>
        <taxon>Spirochaetota</taxon>
        <taxon>Spirochaetia</taxon>
        <taxon>Spirochaetales</taxon>
        <taxon>Treponemataceae</taxon>
        <taxon>Treponema</taxon>
    </lineage>
</organism>